<feature type="chain" id="PRO_0000196074" description="Homeobox protein engrailed-2b">
    <location>
        <begin position="1"/>
        <end position="261"/>
    </location>
</feature>
<feature type="DNA-binding region" description="Homeobox" evidence="1">
    <location>
        <begin position="172"/>
        <end position="231"/>
    </location>
</feature>
<feature type="region of interest" description="Disordered" evidence="2">
    <location>
        <begin position="1"/>
        <end position="24"/>
    </location>
</feature>
<feature type="region of interest" description="Disordered" evidence="2">
    <location>
        <begin position="53"/>
        <end position="125"/>
    </location>
</feature>
<feature type="region of interest" description="Disordered" evidence="2">
    <location>
        <begin position="152"/>
        <end position="176"/>
    </location>
</feature>
<feature type="compositionally biased region" description="Basic and acidic residues" evidence="2">
    <location>
        <begin position="1"/>
        <end position="21"/>
    </location>
</feature>
<feature type="compositionally biased region" description="Basic and acidic residues" evidence="2">
    <location>
        <begin position="53"/>
        <end position="72"/>
    </location>
</feature>
<feature type="compositionally biased region" description="Basic and acidic residues" evidence="2">
    <location>
        <begin position="100"/>
        <end position="116"/>
    </location>
</feature>
<protein>
    <recommendedName>
        <fullName>Homeobox protein engrailed-2b</fullName>
        <shortName>Homeobox protein en-2b</shortName>
    </recommendedName>
    <alternativeName>
        <fullName>Zf-En-1</fullName>
    </alternativeName>
</protein>
<name>HME2B_DANRE</name>
<sequence length="261" mass="29485">MEENDHSNRDVERQDSGDESNRAILPLLQAPGNVLPHRITNFYIDNILRPDFGRRKEGSRRDEINIVERENRCPSAPGSGQVAPVSGEGTSSPRAVNASKKTDISTDESLKSRAETGDQCLSSDSDCSQRCAAQAKQPMLWPAWVYCTRYSDRPSSGPRSRKPKKKTPTKEDKRPRTAFTAEQLQRLKNEFQNNRYLTEQRRQALAQELGLNESQIKIWFQNKRAKIKKATGNKNTLAVHLMAQGLYNHATVTKDDKSDSD</sequence>
<organism>
    <name type="scientific">Danio rerio</name>
    <name type="common">Zebrafish</name>
    <name type="synonym">Brachydanio rerio</name>
    <dbReference type="NCBI Taxonomy" id="7955"/>
    <lineage>
        <taxon>Eukaryota</taxon>
        <taxon>Metazoa</taxon>
        <taxon>Chordata</taxon>
        <taxon>Craniata</taxon>
        <taxon>Vertebrata</taxon>
        <taxon>Euteleostomi</taxon>
        <taxon>Actinopterygii</taxon>
        <taxon>Neopterygii</taxon>
        <taxon>Teleostei</taxon>
        <taxon>Ostariophysi</taxon>
        <taxon>Cypriniformes</taxon>
        <taxon>Danionidae</taxon>
        <taxon>Danioninae</taxon>
        <taxon>Danio</taxon>
    </lineage>
</organism>
<keyword id="KW-0217">Developmental protein</keyword>
<keyword id="KW-0238">DNA-binding</keyword>
<keyword id="KW-0371">Homeobox</keyword>
<keyword id="KW-0539">Nucleus</keyword>
<keyword id="KW-1185">Reference proteome</keyword>
<dbReference type="EMBL" id="X68447">
    <property type="protein sequence ID" value="CAA48492.1"/>
    <property type="molecule type" value="mRNA"/>
</dbReference>
<dbReference type="EMBL" id="X59125">
    <property type="status" value="NOT_ANNOTATED_CDS"/>
    <property type="molecule type" value="Genomic_DNA"/>
</dbReference>
<dbReference type="PIR" id="S30437">
    <property type="entry name" value="S30437"/>
</dbReference>
<dbReference type="RefSeq" id="NP_571115.1">
    <property type="nucleotide sequence ID" value="NM_131040.1"/>
</dbReference>
<dbReference type="SMR" id="P31533"/>
<dbReference type="FunCoup" id="P31533">
    <property type="interactions" value="11"/>
</dbReference>
<dbReference type="STRING" id="7955.ENSDARP00000056747"/>
<dbReference type="PaxDb" id="7955-ENSDARP00000056747"/>
<dbReference type="GeneID" id="30238"/>
<dbReference type="KEGG" id="dre:30238"/>
<dbReference type="AGR" id="ZFIN:ZDB-GENE-980526-40"/>
<dbReference type="CTD" id="30238"/>
<dbReference type="ZFIN" id="ZDB-GENE-980526-40">
    <property type="gene designation" value="en2b"/>
</dbReference>
<dbReference type="eggNOG" id="KOG0493">
    <property type="taxonomic scope" value="Eukaryota"/>
</dbReference>
<dbReference type="InParanoid" id="P31533"/>
<dbReference type="OrthoDB" id="6159439at2759"/>
<dbReference type="PRO" id="PR:P31533"/>
<dbReference type="Proteomes" id="UP000000437">
    <property type="component" value="Chromosome 2"/>
</dbReference>
<dbReference type="GO" id="GO:0005634">
    <property type="term" value="C:nucleus"/>
    <property type="evidence" value="ECO:0000318"/>
    <property type="project" value="GO_Central"/>
</dbReference>
<dbReference type="GO" id="GO:0000981">
    <property type="term" value="F:DNA-binding transcription factor activity, RNA polymerase II-specific"/>
    <property type="evidence" value="ECO:0000318"/>
    <property type="project" value="GO_Central"/>
</dbReference>
<dbReference type="GO" id="GO:0000978">
    <property type="term" value="F:RNA polymerase II cis-regulatory region sequence-specific DNA binding"/>
    <property type="evidence" value="ECO:0000318"/>
    <property type="project" value="GO_Central"/>
</dbReference>
<dbReference type="GO" id="GO:0009952">
    <property type="term" value="P:anterior/posterior pattern specification"/>
    <property type="evidence" value="ECO:0000316"/>
    <property type="project" value="ZFIN"/>
</dbReference>
<dbReference type="GO" id="GO:0001708">
    <property type="term" value="P:cell fate specification"/>
    <property type="evidence" value="ECO:0000316"/>
    <property type="project" value="ZFIN"/>
</dbReference>
<dbReference type="GO" id="GO:0030901">
    <property type="term" value="P:midbrain development"/>
    <property type="evidence" value="ECO:0000316"/>
    <property type="project" value="ZFIN"/>
</dbReference>
<dbReference type="GO" id="GO:0030917">
    <property type="term" value="P:midbrain-hindbrain boundary development"/>
    <property type="evidence" value="ECO:0000316"/>
    <property type="project" value="ZFIN"/>
</dbReference>
<dbReference type="GO" id="GO:0006357">
    <property type="term" value="P:regulation of transcription by RNA polymerase II"/>
    <property type="evidence" value="ECO:0000318"/>
    <property type="project" value="GO_Central"/>
</dbReference>
<dbReference type="CDD" id="cd00086">
    <property type="entry name" value="homeodomain"/>
    <property type="match status" value="1"/>
</dbReference>
<dbReference type="FunFam" id="1.10.10.60:FF:000167">
    <property type="entry name" value="Homeobox protein engrailed-like"/>
    <property type="match status" value="1"/>
</dbReference>
<dbReference type="Gene3D" id="1.10.10.60">
    <property type="entry name" value="Homeodomain-like"/>
    <property type="match status" value="1"/>
</dbReference>
<dbReference type="InterPro" id="IPR050720">
    <property type="entry name" value="Engrailed_Homeobox_TFs"/>
</dbReference>
<dbReference type="InterPro" id="IPR001356">
    <property type="entry name" value="HD"/>
</dbReference>
<dbReference type="InterPro" id="IPR000747">
    <property type="entry name" value="HD_engrailed"/>
</dbReference>
<dbReference type="InterPro" id="IPR020479">
    <property type="entry name" value="HD_metazoa"/>
</dbReference>
<dbReference type="InterPro" id="IPR019549">
    <property type="entry name" value="Homeobox-engrailed_C-terminal"/>
</dbReference>
<dbReference type="InterPro" id="IPR019737">
    <property type="entry name" value="Homeobox-engrailed_CS"/>
</dbReference>
<dbReference type="InterPro" id="IPR017970">
    <property type="entry name" value="Homeobox_CS"/>
</dbReference>
<dbReference type="InterPro" id="IPR009057">
    <property type="entry name" value="Homeodomain-like_sf"/>
</dbReference>
<dbReference type="InterPro" id="IPR000047">
    <property type="entry name" value="HTH_motif"/>
</dbReference>
<dbReference type="PANTHER" id="PTHR24341">
    <property type="entry name" value="HOMEOBOX PROTEIN ENGRAILED"/>
    <property type="match status" value="1"/>
</dbReference>
<dbReference type="PANTHER" id="PTHR24341:SF5">
    <property type="entry name" value="HOMEOBOX PROTEIN ENGRAILED-2"/>
    <property type="match status" value="1"/>
</dbReference>
<dbReference type="Pfam" id="PF10525">
    <property type="entry name" value="Engrail_1_C_sig"/>
    <property type="match status" value="1"/>
</dbReference>
<dbReference type="Pfam" id="PF00046">
    <property type="entry name" value="Homeodomain"/>
    <property type="match status" value="1"/>
</dbReference>
<dbReference type="PRINTS" id="PR00026">
    <property type="entry name" value="ENGRAILED"/>
</dbReference>
<dbReference type="PRINTS" id="PR00024">
    <property type="entry name" value="HOMEOBOX"/>
</dbReference>
<dbReference type="PRINTS" id="PR00031">
    <property type="entry name" value="HTHREPRESSR"/>
</dbReference>
<dbReference type="SMART" id="SM00389">
    <property type="entry name" value="HOX"/>
    <property type="match status" value="1"/>
</dbReference>
<dbReference type="SUPFAM" id="SSF46689">
    <property type="entry name" value="Homeodomain-like"/>
    <property type="match status" value="1"/>
</dbReference>
<dbReference type="PROSITE" id="PS00033">
    <property type="entry name" value="ENGRAILED"/>
    <property type="match status" value="1"/>
</dbReference>
<dbReference type="PROSITE" id="PS00027">
    <property type="entry name" value="HOMEOBOX_1"/>
    <property type="match status" value="1"/>
</dbReference>
<dbReference type="PROSITE" id="PS50071">
    <property type="entry name" value="HOMEOBOX_2"/>
    <property type="match status" value="1"/>
</dbReference>
<accession>P31533</accession>
<proteinExistence type="evidence at transcript level"/>
<gene>
    <name type="primary">eng2b</name>
    <name type="synonym">eng-3</name>
    <name type="synonym">eng3</name>
    <name type="synonym">zf-en-1</name>
</gene>
<evidence type="ECO:0000255" key="1">
    <source>
        <dbReference type="PROSITE-ProRule" id="PRU00108"/>
    </source>
</evidence>
<evidence type="ECO:0000256" key="2">
    <source>
        <dbReference type="SAM" id="MobiDB-lite"/>
    </source>
</evidence>
<evidence type="ECO:0000305" key="3"/>
<reference key="1">
    <citation type="journal article" date="1992" name="Development">
        <title>Coordinate embryonic expression of three zebrafish engrailed genes.</title>
        <authorList>
            <person name="Ekker M."/>
            <person name="Wegner J."/>
            <person name="Akimenko M.-A."/>
            <person name="Westerfield M."/>
        </authorList>
    </citation>
    <scope>NUCLEOTIDE SEQUENCE [MRNA]</scope>
</reference>
<reference key="2">
    <citation type="journal article" date="1990" name="FEBS Lett.">
        <title>Conservation of engrailed-like homeobox sequences during vertebrate evolution.</title>
        <authorList>
            <person name="Holland P.W.H."/>
            <person name="Williams N.A."/>
        </authorList>
    </citation>
    <scope>NUCLEOTIDE SEQUENCE [GENOMIC DNA] OF 181-240</scope>
</reference>
<comment type="subcellular location">
    <subcellularLocation>
        <location>Nucleus</location>
    </subcellularLocation>
</comment>
<comment type="similarity">
    <text evidence="3">Belongs to the engrailed homeobox family.</text>
</comment>